<name>DPHB_HALWD</name>
<sequence>MLTFIGLGLYDERSISIAGRDALQAADYVAAEFYTSYLVDATVSDLETAHDIDIDVRDREGVEQHPEDILRKAQSEDVAFLTAGDTMISTTHTDLRLRAIDRGIDTRVIHGVTAQTAASGLTGLQNYRFGKSVTLPFPYAHGAEGVPTSVTDSIAANRERGLHTVVYLDIKANRDEYLRASDAAEMLATDLEDMLAIAVARAGSPDPTVRADRLSALAEKDFGDPLHLLVLPGELHHLEEEALAALADAPADMLNAVDSQ</sequence>
<comment type="function">
    <text evidence="1">S-adenosyl-L-methionine-dependent methyltransferase that catalyzes the trimethylation of the amino group of the modified target histidine residue in translation elongation factor 2 (EF-2), to form an intermediate called diphthine. The three successive methylation reactions represent the second step of diphthamide biosynthesis.</text>
</comment>
<comment type="catalytic activity">
    <reaction evidence="1">
        <text>2-[(3S)-amino-3-carboxypropyl]-L-histidyl-[translation elongation factor 2] + 3 S-adenosyl-L-methionine = diphthine-[translation elongation factor 2] + 3 S-adenosyl-L-homocysteine + 3 H(+)</text>
        <dbReference type="Rhea" id="RHEA:36415"/>
        <dbReference type="Rhea" id="RHEA-COMP:9749"/>
        <dbReference type="Rhea" id="RHEA-COMP:10172"/>
        <dbReference type="ChEBI" id="CHEBI:15378"/>
        <dbReference type="ChEBI" id="CHEBI:57856"/>
        <dbReference type="ChEBI" id="CHEBI:59789"/>
        <dbReference type="ChEBI" id="CHEBI:73995"/>
        <dbReference type="ChEBI" id="CHEBI:82696"/>
        <dbReference type="EC" id="2.1.1.98"/>
    </reaction>
</comment>
<comment type="pathway">
    <text evidence="1">Protein modification; peptidyl-diphthamide biosynthesis.</text>
</comment>
<comment type="subunit">
    <text evidence="1">Homodimer.</text>
</comment>
<comment type="similarity">
    <text evidence="1">Belongs to the diphthine synthase family.</text>
</comment>
<dbReference type="EC" id="2.1.1.98" evidence="1"/>
<dbReference type="EMBL" id="AM180088">
    <property type="protein sequence ID" value="CAJ51731.1"/>
    <property type="molecule type" value="Genomic_DNA"/>
</dbReference>
<dbReference type="RefSeq" id="WP_011570883.1">
    <property type="nucleotide sequence ID" value="NC_008212.1"/>
</dbReference>
<dbReference type="SMR" id="Q18JS3"/>
<dbReference type="STRING" id="362976.HQ_1603A"/>
<dbReference type="GeneID" id="4193927"/>
<dbReference type="KEGG" id="hwa:HQ_1603A"/>
<dbReference type="eggNOG" id="arCOG04161">
    <property type="taxonomic scope" value="Archaea"/>
</dbReference>
<dbReference type="HOGENOM" id="CLU_066040_0_0_2"/>
<dbReference type="UniPathway" id="UPA00559"/>
<dbReference type="Proteomes" id="UP000001975">
    <property type="component" value="Chromosome"/>
</dbReference>
<dbReference type="GO" id="GO:0004164">
    <property type="term" value="F:diphthine synthase activity"/>
    <property type="evidence" value="ECO:0007669"/>
    <property type="project" value="UniProtKB-UniRule"/>
</dbReference>
<dbReference type="GO" id="GO:0032259">
    <property type="term" value="P:methylation"/>
    <property type="evidence" value="ECO:0007669"/>
    <property type="project" value="UniProtKB-KW"/>
</dbReference>
<dbReference type="GO" id="GO:0017183">
    <property type="term" value="P:protein histidyl modification to diphthamide"/>
    <property type="evidence" value="ECO:0007669"/>
    <property type="project" value="UniProtKB-UniRule"/>
</dbReference>
<dbReference type="CDD" id="cd11647">
    <property type="entry name" value="DHP5_DphB"/>
    <property type="match status" value="1"/>
</dbReference>
<dbReference type="Gene3D" id="3.40.1010.10">
    <property type="entry name" value="Cobalt-precorrin-4 Transmethylase, Domain 1"/>
    <property type="match status" value="1"/>
</dbReference>
<dbReference type="Gene3D" id="3.30.950.10">
    <property type="entry name" value="Methyltransferase, Cobalt-precorrin-4 Transmethylase, Domain 2"/>
    <property type="match status" value="1"/>
</dbReference>
<dbReference type="HAMAP" id="MF_01084">
    <property type="entry name" value="Diphthine_synth"/>
    <property type="match status" value="1"/>
</dbReference>
<dbReference type="InterPro" id="IPR000878">
    <property type="entry name" value="4pyrrol_Mease"/>
</dbReference>
<dbReference type="InterPro" id="IPR035996">
    <property type="entry name" value="4pyrrol_Methylase_sf"/>
</dbReference>
<dbReference type="InterPro" id="IPR014777">
    <property type="entry name" value="4pyrrole_Mease_sub1"/>
</dbReference>
<dbReference type="InterPro" id="IPR014776">
    <property type="entry name" value="4pyrrole_Mease_sub2"/>
</dbReference>
<dbReference type="InterPro" id="IPR004551">
    <property type="entry name" value="Dphthn_synthase"/>
</dbReference>
<dbReference type="NCBIfam" id="TIGR00522">
    <property type="entry name" value="dph5"/>
    <property type="match status" value="1"/>
</dbReference>
<dbReference type="PANTHER" id="PTHR10882:SF0">
    <property type="entry name" value="DIPHTHINE METHYL ESTER SYNTHASE"/>
    <property type="match status" value="1"/>
</dbReference>
<dbReference type="PANTHER" id="PTHR10882">
    <property type="entry name" value="DIPHTHINE SYNTHASE"/>
    <property type="match status" value="1"/>
</dbReference>
<dbReference type="Pfam" id="PF00590">
    <property type="entry name" value="TP_methylase"/>
    <property type="match status" value="1"/>
</dbReference>
<dbReference type="PIRSF" id="PIRSF036432">
    <property type="entry name" value="Diphthine_synth"/>
    <property type="match status" value="1"/>
</dbReference>
<dbReference type="SUPFAM" id="SSF53790">
    <property type="entry name" value="Tetrapyrrole methylase"/>
    <property type="match status" value="1"/>
</dbReference>
<organism>
    <name type="scientific">Haloquadratum walsbyi (strain DSM 16790 / HBSQ001)</name>
    <dbReference type="NCBI Taxonomy" id="362976"/>
    <lineage>
        <taxon>Archaea</taxon>
        <taxon>Methanobacteriati</taxon>
        <taxon>Methanobacteriota</taxon>
        <taxon>Stenosarchaea group</taxon>
        <taxon>Halobacteria</taxon>
        <taxon>Halobacteriales</taxon>
        <taxon>Haloferacaceae</taxon>
        <taxon>Haloquadratum</taxon>
    </lineage>
</organism>
<keyword id="KW-0489">Methyltransferase</keyword>
<keyword id="KW-1185">Reference proteome</keyword>
<keyword id="KW-0949">S-adenosyl-L-methionine</keyword>
<keyword id="KW-0808">Transferase</keyword>
<proteinExistence type="inferred from homology"/>
<reference key="1">
    <citation type="journal article" date="2006" name="BMC Genomics">
        <title>The genome of the square archaeon Haloquadratum walsbyi: life at the limits of water activity.</title>
        <authorList>
            <person name="Bolhuis H."/>
            <person name="Palm P."/>
            <person name="Wende A."/>
            <person name="Falb M."/>
            <person name="Rampp M."/>
            <person name="Rodriguez-Valera F."/>
            <person name="Pfeiffer F."/>
            <person name="Oesterhelt D."/>
        </authorList>
    </citation>
    <scope>NUCLEOTIDE SEQUENCE [LARGE SCALE GENOMIC DNA]</scope>
    <source>
        <strain>DSM 16790 / HBSQ001</strain>
    </source>
</reference>
<evidence type="ECO:0000255" key="1">
    <source>
        <dbReference type="HAMAP-Rule" id="MF_01084"/>
    </source>
</evidence>
<accession>Q18JS3</accession>
<gene>
    <name evidence="1" type="primary">dphB</name>
    <name type="ordered locus">HQ_1603A</name>
</gene>
<protein>
    <recommendedName>
        <fullName evidence="1">Diphthine synthase</fullName>
        <ecNumber evidence="1">2.1.1.98</ecNumber>
    </recommendedName>
    <alternativeName>
        <fullName evidence="1">Diphthamide biosynthesis methyltransferase</fullName>
    </alternativeName>
</protein>
<feature type="chain" id="PRO_1000064814" description="Diphthine synthase">
    <location>
        <begin position="1"/>
        <end position="260"/>
    </location>
</feature>
<feature type="binding site" evidence="1">
    <location>
        <position position="9"/>
    </location>
    <ligand>
        <name>S-adenosyl-L-methionine</name>
        <dbReference type="ChEBI" id="CHEBI:59789"/>
    </ligand>
</feature>
<feature type="binding site" evidence="1">
    <location>
        <position position="85"/>
    </location>
    <ligand>
        <name>S-adenosyl-L-methionine</name>
        <dbReference type="ChEBI" id="CHEBI:59789"/>
    </ligand>
</feature>
<feature type="binding site" evidence="1">
    <location>
        <position position="88"/>
    </location>
    <ligand>
        <name>S-adenosyl-L-methionine</name>
        <dbReference type="ChEBI" id="CHEBI:59789"/>
    </ligand>
</feature>
<feature type="binding site" evidence="1">
    <location>
        <begin position="113"/>
        <end position="114"/>
    </location>
    <ligand>
        <name>S-adenosyl-L-methionine</name>
        <dbReference type="ChEBI" id="CHEBI:59789"/>
    </ligand>
</feature>
<feature type="binding site" evidence="1">
    <location>
        <position position="168"/>
    </location>
    <ligand>
        <name>S-adenosyl-L-methionine</name>
        <dbReference type="ChEBI" id="CHEBI:59789"/>
    </ligand>
</feature>
<feature type="binding site" evidence="1">
    <location>
        <position position="202"/>
    </location>
    <ligand>
        <name>S-adenosyl-L-methionine</name>
        <dbReference type="ChEBI" id="CHEBI:59789"/>
    </ligand>
</feature>
<feature type="binding site" evidence="1">
    <location>
        <position position="227"/>
    </location>
    <ligand>
        <name>S-adenosyl-L-methionine</name>
        <dbReference type="ChEBI" id="CHEBI:59789"/>
    </ligand>
</feature>